<gene>
    <name type="primary">COII</name>
</gene>
<comment type="function">
    <text evidence="1">Component of the cytochrome c oxidase, the last enzyme in the mitochondrial electron transport chain which drives oxidative phosphorylation. The respiratory chain contains 3 multisubunit complexes succinate dehydrogenase (complex II, CII), ubiquinol-cytochrome c oxidoreductase (cytochrome b-c1 complex, complex III, CIII) and cytochrome c oxidase (complex IV, CIV), that cooperate to transfer electrons derived from NADH and succinate to molecular oxygen, creating an electrochemical gradient over the inner membrane that drives transmembrane transport and the ATP synthase. Cytochrome c oxidase is the component of the respiratory chain that catalyzes the reduction of oxygen to water. Electrons originating from reduced cytochrome c in the intermembrane space (IMS) are transferred via the dinuclear copper A center (CU(A)) of subunit 2 and heme A of subunit 1 to the active site in subunit 1, a binuclear center (BNC) formed by heme A3 and copper B (CU(B)). The BNC reduces molecular oxygen to 2 water molecules using 4 electrons from cytochrome c in the IMS and 4 protons from the mitochondrial matrix.</text>
</comment>
<comment type="catalytic activity">
    <reaction evidence="1">
        <text>4 Fe(II)-[cytochrome c] + O2 + 8 H(+)(in) = 4 Fe(III)-[cytochrome c] + 2 H2O + 4 H(+)(out)</text>
        <dbReference type="Rhea" id="RHEA:11436"/>
        <dbReference type="Rhea" id="RHEA-COMP:10350"/>
        <dbReference type="Rhea" id="RHEA-COMP:14399"/>
        <dbReference type="ChEBI" id="CHEBI:15377"/>
        <dbReference type="ChEBI" id="CHEBI:15378"/>
        <dbReference type="ChEBI" id="CHEBI:15379"/>
        <dbReference type="ChEBI" id="CHEBI:29033"/>
        <dbReference type="ChEBI" id="CHEBI:29034"/>
        <dbReference type="EC" id="7.1.1.9"/>
    </reaction>
    <physiologicalReaction direction="left-to-right" evidence="1">
        <dbReference type="Rhea" id="RHEA:11437"/>
    </physiologicalReaction>
</comment>
<comment type="cofactor">
    <cofactor evidence="1">
        <name>Cu cation</name>
        <dbReference type="ChEBI" id="CHEBI:23378"/>
    </cofactor>
    <text evidence="1">Binds a dinuclear copper A center per subunit.</text>
</comment>
<comment type="subunit">
    <text evidence="1">Component of the cytochrome c oxidase (complex IV, CIV), a multisubunit enzyme composed of a catalytic core of 3 subunits and several supernumerary subunits. The complex exists as a monomer or a dimer and forms supercomplexes (SCs) in the inner mitochondrial membrane with ubiquinol-cytochrome c oxidoreductase (cytochrome b-c1 complex, complex III, CIII).</text>
</comment>
<comment type="subcellular location">
    <subcellularLocation>
        <location evidence="1">Mitochondrion inner membrane</location>
    </subcellularLocation>
</comment>
<comment type="similarity">
    <text evidence="2">Belongs to the cytochrome c oxidase subunit 2 family.</text>
</comment>
<organism>
    <name type="scientific">Paramecium primaurelia</name>
    <dbReference type="NCBI Taxonomy" id="5886"/>
    <lineage>
        <taxon>Eukaryota</taxon>
        <taxon>Sar</taxon>
        <taxon>Alveolata</taxon>
        <taxon>Ciliophora</taxon>
        <taxon>Intramacronucleata</taxon>
        <taxon>Oligohymenophorea</taxon>
        <taxon>Peniculida</taxon>
        <taxon>Parameciidae</taxon>
        <taxon>Paramecium</taxon>
    </lineage>
</organism>
<protein>
    <recommendedName>
        <fullName>Cytochrome c oxidase subunit 2</fullName>
        <ecNumber>7.1.1.9</ecNumber>
    </recommendedName>
    <alternativeName>
        <fullName>Cytochrome c oxidase polypeptide II</fullName>
    </alternativeName>
</protein>
<evidence type="ECO:0000250" key="1">
    <source>
        <dbReference type="UniProtKB" id="P00410"/>
    </source>
</evidence>
<evidence type="ECO:0000305" key="2"/>
<sequence>MPLRVKLDKNDLSKNTASVKFTDKPYLVANKIIKSLEFNATSLYRCIKKNKLRSENFSVQLSRRLLRTKKTLVLPSHVNITLISNSYDVILSWFIPALGIKIDCVXGRATHHTFYCDSVGFYYGQCAEICGRYHHHMPIKLCILPFEHFLIWWQHFGLPKLLFTESKNRFETDYGLKKFCW</sequence>
<proteinExistence type="inferred from homology"/>
<accession>P08748</accession>
<keyword id="KW-0186">Copper</keyword>
<keyword id="KW-0249">Electron transport</keyword>
<keyword id="KW-0460">Magnesium</keyword>
<keyword id="KW-0472">Membrane</keyword>
<keyword id="KW-0479">Metal-binding</keyword>
<keyword id="KW-0496">Mitochondrion</keyword>
<keyword id="KW-0999">Mitochondrion inner membrane</keyword>
<keyword id="KW-0679">Respiratory chain</keyword>
<keyword id="KW-1278">Translocase</keyword>
<keyword id="KW-0813">Transport</keyword>
<reference key="1">
    <citation type="journal article" date="1986" name="Gene">
        <title>Identification of Paramecium mitochondrial proteins using antibodies raised against fused mitochondrial gene products.</title>
        <authorList>
            <person name="Mahalingam R."/>
            <person name="Seilhamer J.J."/>
            <person name="Pritchard A.E."/>
            <person name="Cummings D.J."/>
        </authorList>
    </citation>
    <scope>NUCLEOTIDE SEQUENCE [GENOMIC DNA]</scope>
</reference>
<geneLocation type="mitochondrion"/>
<name>COX2_PARPR</name>
<feature type="chain" id="PRO_0000183652" description="Cytochrome c oxidase subunit 2">
    <location>
        <begin position="1"/>
        <end position="181"/>
    </location>
</feature>
<feature type="binding site" evidence="1">
    <location>
        <position position="126"/>
    </location>
    <ligand>
        <name>Cu cation</name>
        <dbReference type="ChEBI" id="CHEBI:23378"/>
        <label>A1</label>
    </ligand>
</feature>
<feature type="binding site" evidence="1">
    <location>
        <position position="126"/>
    </location>
    <ligand>
        <name>Cu cation</name>
        <dbReference type="ChEBI" id="CHEBI:23378"/>
        <label>A2</label>
    </ligand>
</feature>
<feature type="binding site" evidence="1">
    <location>
        <position position="128"/>
    </location>
    <ligand>
        <name>Cu cation</name>
        <dbReference type="ChEBI" id="CHEBI:23378"/>
        <label>A2</label>
    </ligand>
</feature>
<feature type="binding site" evidence="1">
    <location>
        <position position="128"/>
    </location>
    <ligand>
        <name>Mg(2+)</name>
        <dbReference type="ChEBI" id="CHEBI:18420"/>
        <note>ligand shared with subunit 1</note>
    </ligand>
</feature>
<feature type="binding site" evidence="1">
    <location>
        <position position="130"/>
    </location>
    <ligand>
        <name>Cu cation</name>
        <dbReference type="ChEBI" id="CHEBI:23378"/>
        <label>A1</label>
    </ligand>
</feature>
<feature type="binding site" evidence="1">
    <location>
        <position position="130"/>
    </location>
    <ligand>
        <name>Cu cation</name>
        <dbReference type="ChEBI" id="CHEBI:23378"/>
        <label>A2</label>
    </ligand>
</feature>
<feature type="binding site" evidence="1">
    <location>
        <position position="134"/>
    </location>
    <ligand>
        <name>Cu cation</name>
        <dbReference type="ChEBI" id="CHEBI:23378"/>
        <label>A2</label>
    </ligand>
</feature>
<feature type="binding site" evidence="1">
    <location>
        <position position="137"/>
    </location>
    <ligand>
        <name>Cu cation</name>
        <dbReference type="ChEBI" id="CHEBI:23378"/>
        <label>A1</label>
    </ligand>
</feature>
<dbReference type="EC" id="7.1.1.9"/>
<dbReference type="EMBL" id="M15219">
    <property type="protein sequence ID" value="AAA32007.2"/>
    <property type="status" value="ALT_SEQ"/>
    <property type="molecule type" value="Genomic_DNA"/>
</dbReference>
<dbReference type="PIR" id="B26530">
    <property type="entry name" value="B26530"/>
</dbReference>
<dbReference type="GO" id="GO:0005743">
    <property type="term" value="C:mitochondrial inner membrane"/>
    <property type="evidence" value="ECO:0007669"/>
    <property type="project" value="UniProtKB-SubCell"/>
</dbReference>
<dbReference type="GO" id="GO:0005507">
    <property type="term" value="F:copper ion binding"/>
    <property type="evidence" value="ECO:0007669"/>
    <property type="project" value="InterPro"/>
</dbReference>
<dbReference type="GO" id="GO:0004129">
    <property type="term" value="F:cytochrome-c oxidase activity"/>
    <property type="evidence" value="ECO:0007669"/>
    <property type="project" value="UniProtKB-EC"/>
</dbReference>
<dbReference type="GO" id="GO:0042773">
    <property type="term" value="P:ATP synthesis coupled electron transport"/>
    <property type="evidence" value="ECO:0007669"/>
    <property type="project" value="TreeGrafter"/>
</dbReference>
<dbReference type="Gene3D" id="2.60.40.420">
    <property type="entry name" value="Cupredoxins - blue copper proteins"/>
    <property type="match status" value="1"/>
</dbReference>
<dbReference type="InterPro" id="IPR045187">
    <property type="entry name" value="CcO_II"/>
</dbReference>
<dbReference type="InterPro" id="IPR002429">
    <property type="entry name" value="CcO_II-like_C"/>
</dbReference>
<dbReference type="InterPro" id="IPR008972">
    <property type="entry name" value="Cupredoxin"/>
</dbReference>
<dbReference type="PANTHER" id="PTHR22888:SF9">
    <property type="entry name" value="CYTOCHROME C OXIDASE SUBUNIT 2"/>
    <property type="match status" value="1"/>
</dbReference>
<dbReference type="PANTHER" id="PTHR22888">
    <property type="entry name" value="CYTOCHROME C OXIDASE, SUBUNIT II"/>
    <property type="match status" value="1"/>
</dbReference>
<dbReference type="Pfam" id="PF00116">
    <property type="entry name" value="COX2"/>
    <property type="match status" value="1"/>
</dbReference>
<dbReference type="PRINTS" id="PR01166">
    <property type="entry name" value="CYCOXIDASEII"/>
</dbReference>
<dbReference type="SUPFAM" id="SSF49503">
    <property type="entry name" value="Cupredoxins"/>
    <property type="match status" value="1"/>
</dbReference>
<dbReference type="PROSITE" id="PS50857">
    <property type="entry name" value="COX2_CUA"/>
    <property type="match status" value="1"/>
</dbReference>